<reference key="1">
    <citation type="journal article" date="2002" name="Nucleic Acids Res.">
        <title>The complete genomic sequence of Mycoplasma penetrans, an intracellular bacterial pathogen in humans.</title>
        <authorList>
            <person name="Sasaki Y."/>
            <person name="Ishikawa J."/>
            <person name="Yamashita A."/>
            <person name="Oshima K."/>
            <person name="Kenri T."/>
            <person name="Furuya K."/>
            <person name="Yoshino C."/>
            <person name="Horino A."/>
            <person name="Shiba T."/>
            <person name="Sasaki T."/>
            <person name="Hattori M."/>
        </authorList>
    </citation>
    <scope>NUCLEOTIDE SEQUENCE [LARGE SCALE GENOMIC DNA]</scope>
    <source>
        <strain>HF-2</strain>
    </source>
</reference>
<feature type="chain" id="PRO_0000078495" description="Chaperone protein DnaK">
    <location>
        <begin position="1"/>
        <end position="621"/>
    </location>
</feature>
<feature type="region of interest" description="Disordered" evidence="2">
    <location>
        <begin position="596"/>
        <end position="621"/>
    </location>
</feature>
<feature type="compositionally biased region" description="Basic and acidic residues" evidence="2">
    <location>
        <begin position="604"/>
        <end position="621"/>
    </location>
</feature>
<feature type="modified residue" description="Phosphothreonine; by autocatalysis" evidence="1">
    <location>
        <position position="202"/>
    </location>
</feature>
<organism>
    <name type="scientific">Malacoplasma penetrans (strain HF-2)</name>
    <name type="common">Mycoplasma penetrans</name>
    <dbReference type="NCBI Taxonomy" id="272633"/>
    <lineage>
        <taxon>Bacteria</taxon>
        <taxon>Bacillati</taxon>
        <taxon>Mycoplasmatota</taxon>
        <taxon>Mycoplasmoidales</taxon>
        <taxon>Mycoplasmoidaceae</taxon>
        <taxon>Malacoplasma</taxon>
    </lineage>
</organism>
<keyword id="KW-0067">ATP-binding</keyword>
<keyword id="KW-0143">Chaperone</keyword>
<keyword id="KW-0547">Nucleotide-binding</keyword>
<keyword id="KW-0597">Phosphoprotein</keyword>
<keyword id="KW-1185">Reference proteome</keyword>
<keyword id="KW-0346">Stress response</keyword>
<evidence type="ECO:0000255" key="1">
    <source>
        <dbReference type="HAMAP-Rule" id="MF_00332"/>
    </source>
</evidence>
<evidence type="ECO:0000256" key="2">
    <source>
        <dbReference type="SAM" id="MobiDB-lite"/>
    </source>
</evidence>
<gene>
    <name evidence="1" type="primary">dnaK</name>
    <name type="ordered locus">MYPE9490</name>
</gene>
<name>DNAK_MALP2</name>
<dbReference type="EMBL" id="BA000026">
    <property type="protein sequence ID" value="BAC44736.1"/>
    <property type="molecule type" value="Genomic_DNA"/>
</dbReference>
<dbReference type="SMR" id="Q8EUH7"/>
<dbReference type="FunCoup" id="Q8EUH7">
    <property type="interactions" value="247"/>
</dbReference>
<dbReference type="STRING" id="272633.gene:10732070"/>
<dbReference type="KEGG" id="mpe:MYPE9490"/>
<dbReference type="eggNOG" id="COG0443">
    <property type="taxonomic scope" value="Bacteria"/>
</dbReference>
<dbReference type="HOGENOM" id="CLU_005965_2_4_14"/>
<dbReference type="InParanoid" id="Q8EUH7"/>
<dbReference type="Proteomes" id="UP000002522">
    <property type="component" value="Chromosome"/>
</dbReference>
<dbReference type="GO" id="GO:0005524">
    <property type="term" value="F:ATP binding"/>
    <property type="evidence" value="ECO:0007669"/>
    <property type="project" value="UniProtKB-UniRule"/>
</dbReference>
<dbReference type="GO" id="GO:0140662">
    <property type="term" value="F:ATP-dependent protein folding chaperone"/>
    <property type="evidence" value="ECO:0007669"/>
    <property type="project" value="InterPro"/>
</dbReference>
<dbReference type="GO" id="GO:0051082">
    <property type="term" value="F:unfolded protein binding"/>
    <property type="evidence" value="ECO:0007669"/>
    <property type="project" value="InterPro"/>
</dbReference>
<dbReference type="CDD" id="cd10234">
    <property type="entry name" value="ASKHA_NBD_HSP70_DnaK-like"/>
    <property type="match status" value="1"/>
</dbReference>
<dbReference type="FunFam" id="2.60.34.10:FF:000014">
    <property type="entry name" value="Chaperone protein DnaK HSP70"/>
    <property type="match status" value="1"/>
</dbReference>
<dbReference type="FunFam" id="3.30.420.40:FF:000071">
    <property type="entry name" value="Molecular chaperone DnaK"/>
    <property type="match status" value="1"/>
</dbReference>
<dbReference type="FunFam" id="3.90.640.10:FF:000003">
    <property type="entry name" value="Molecular chaperone DnaK"/>
    <property type="match status" value="1"/>
</dbReference>
<dbReference type="Gene3D" id="3.30.420.40">
    <property type="match status" value="2"/>
</dbReference>
<dbReference type="Gene3D" id="3.90.640.10">
    <property type="entry name" value="Actin, Chain A, domain 4"/>
    <property type="match status" value="1"/>
</dbReference>
<dbReference type="Gene3D" id="2.60.34.10">
    <property type="entry name" value="Substrate Binding Domain Of DNAk, Chain A, domain 1"/>
    <property type="match status" value="1"/>
</dbReference>
<dbReference type="HAMAP" id="MF_00332">
    <property type="entry name" value="DnaK"/>
    <property type="match status" value="1"/>
</dbReference>
<dbReference type="InterPro" id="IPR043129">
    <property type="entry name" value="ATPase_NBD"/>
</dbReference>
<dbReference type="InterPro" id="IPR012725">
    <property type="entry name" value="Chaperone_DnaK"/>
</dbReference>
<dbReference type="InterPro" id="IPR018181">
    <property type="entry name" value="Heat_shock_70_CS"/>
</dbReference>
<dbReference type="InterPro" id="IPR029047">
    <property type="entry name" value="HSP70_peptide-bd_sf"/>
</dbReference>
<dbReference type="InterPro" id="IPR013126">
    <property type="entry name" value="Hsp_70_fam"/>
</dbReference>
<dbReference type="NCBIfam" id="NF001413">
    <property type="entry name" value="PRK00290.1"/>
    <property type="match status" value="1"/>
</dbReference>
<dbReference type="NCBIfam" id="TIGR02350">
    <property type="entry name" value="prok_dnaK"/>
    <property type="match status" value="1"/>
</dbReference>
<dbReference type="PANTHER" id="PTHR19375">
    <property type="entry name" value="HEAT SHOCK PROTEIN 70KDA"/>
    <property type="match status" value="1"/>
</dbReference>
<dbReference type="Pfam" id="PF00012">
    <property type="entry name" value="HSP70"/>
    <property type="match status" value="1"/>
</dbReference>
<dbReference type="PRINTS" id="PR00301">
    <property type="entry name" value="HEATSHOCK70"/>
</dbReference>
<dbReference type="SUPFAM" id="SSF53067">
    <property type="entry name" value="Actin-like ATPase domain"/>
    <property type="match status" value="2"/>
</dbReference>
<dbReference type="SUPFAM" id="SSF100920">
    <property type="entry name" value="Heat shock protein 70kD (HSP70), peptide-binding domain"/>
    <property type="match status" value="1"/>
</dbReference>
<dbReference type="PROSITE" id="PS00297">
    <property type="entry name" value="HSP70_1"/>
    <property type="match status" value="1"/>
</dbReference>
<dbReference type="PROSITE" id="PS00329">
    <property type="entry name" value="HSP70_2"/>
    <property type="match status" value="1"/>
</dbReference>
<dbReference type="PROSITE" id="PS01036">
    <property type="entry name" value="HSP70_3"/>
    <property type="match status" value="1"/>
</dbReference>
<comment type="function">
    <text evidence="1">Acts as a chaperone.</text>
</comment>
<comment type="induction">
    <text evidence="1">By stress conditions e.g. heat shock.</text>
</comment>
<comment type="similarity">
    <text evidence="1">Belongs to the heat shock protein 70 family.</text>
</comment>
<sequence>MRVLKYMLLYILYLKSIVKILRRLNNMAGSNIIIGIDLGTTNSCVAVMENGKSKILETPEGKRTIPSVVAFKDNEIIVGDVAKRQMVTNKNTISSIKRLMGTDKTVEVNGKKYTPEQISAQILSYIKKCAEEKLGQTITKAVITVPAYFNDAERNATKNAGKIAGLEVERIINEPTAAALAYGMDKSKTEHKVLVYDLGGGTFDVSILEIADGTFEVLSTSGDNHLGGDDWDQKIINWIVEEVKKNDKVDLSNDKMAMQRLKDAAEKAKIDLSGLKEVEISLPFIAMTESGPLNVDLKLTRAKFEDLTRDLLERTIKPVEDALKEAKLSASDIHKVLLVGGSTRMPAVEELVKSKLGKSPDKNINPDEVVAAGAAIQGGVLMGDVKDILLLDVTPLTLSIETMGGVSTPLIKRNSTIPISKSQIFSTAADNQPAVDVHVLQGERQMAADNKSLGRFILDGIEPAPRGVPQIEITFNIDANGILNVKAVDKKTNKEATITIKDSSGLSQEEIDKMIKEAEENKEKDAQLKEQQEIRYKAESLINMFKTSLNGEEGKKVDAKQKEEAEKMINEFETLLKEEKWDELKTKINQFEAMASQFAQAAKQNEEKKEEDKKDSEESKN</sequence>
<accession>Q8EUH7</accession>
<protein>
    <recommendedName>
        <fullName evidence="1">Chaperone protein DnaK</fullName>
    </recommendedName>
    <alternativeName>
        <fullName evidence="1">HSP70</fullName>
    </alternativeName>
    <alternativeName>
        <fullName evidence="1">Heat shock 70 kDa protein</fullName>
    </alternativeName>
    <alternativeName>
        <fullName evidence="1">Heat shock protein 70</fullName>
    </alternativeName>
</protein>
<proteinExistence type="inferred from homology"/>